<accession>O34827</accession>
<organism>
    <name type="scientific">Bacillus subtilis (strain 168)</name>
    <dbReference type="NCBI Taxonomy" id="224308"/>
    <lineage>
        <taxon>Bacteria</taxon>
        <taxon>Bacillati</taxon>
        <taxon>Bacillota</taxon>
        <taxon>Bacilli</taxon>
        <taxon>Bacillales</taxon>
        <taxon>Bacillaceae</taxon>
        <taxon>Bacillus</taxon>
    </lineage>
</organism>
<keyword id="KW-0238">DNA-binding</keyword>
<keyword id="KW-1185">Reference proteome</keyword>
<keyword id="KW-0804">Transcription</keyword>
<keyword id="KW-0805">Transcription regulation</keyword>
<name>YKUM_BACSU</name>
<evidence type="ECO:0000255" key="1">
    <source>
        <dbReference type="PROSITE-ProRule" id="PRU00253"/>
    </source>
</evidence>
<evidence type="ECO:0000305" key="2"/>
<reference key="1">
    <citation type="submission" date="1997-11" db="EMBL/GenBank/DDBJ databases">
        <title>Sequence of the Bacillus subtilis chromosome from ykuA to cse-15.</title>
        <authorList>
            <person name="Scanlan E."/>
            <person name="Devine K.M."/>
        </authorList>
    </citation>
    <scope>NUCLEOTIDE SEQUENCE [GENOMIC DNA]</scope>
    <source>
        <strain>168</strain>
    </source>
</reference>
<reference key="2">
    <citation type="journal article" date="1997" name="Nature">
        <title>The complete genome sequence of the Gram-positive bacterium Bacillus subtilis.</title>
        <authorList>
            <person name="Kunst F."/>
            <person name="Ogasawara N."/>
            <person name="Moszer I."/>
            <person name="Albertini A.M."/>
            <person name="Alloni G."/>
            <person name="Azevedo V."/>
            <person name="Bertero M.G."/>
            <person name="Bessieres P."/>
            <person name="Bolotin A."/>
            <person name="Borchert S."/>
            <person name="Borriss R."/>
            <person name="Boursier L."/>
            <person name="Brans A."/>
            <person name="Braun M."/>
            <person name="Brignell S.C."/>
            <person name="Bron S."/>
            <person name="Brouillet S."/>
            <person name="Bruschi C.V."/>
            <person name="Caldwell B."/>
            <person name="Capuano V."/>
            <person name="Carter N.M."/>
            <person name="Choi S.-K."/>
            <person name="Codani J.-J."/>
            <person name="Connerton I.F."/>
            <person name="Cummings N.J."/>
            <person name="Daniel R.A."/>
            <person name="Denizot F."/>
            <person name="Devine K.M."/>
            <person name="Duesterhoeft A."/>
            <person name="Ehrlich S.D."/>
            <person name="Emmerson P.T."/>
            <person name="Entian K.-D."/>
            <person name="Errington J."/>
            <person name="Fabret C."/>
            <person name="Ferrari E."/>
            <person name="Foulger D."/>
            <person name="Fritz C."/>
            <person name="Fujita M."/>
            <person name="Fujita Y."/>
            <person name="Fuma S."/>
            <person name="Galizzi A."/>
            <person name="Galleron N."/>
            <person name="Ghim S.-Y."/>
            <person name="Glaser P."/>
            <person name="Goffeau A."/>
            <person name="Golightly E.J."/>
            <person name="Grandi G."/>
            <person name="Guiseppi G."/>
            <person name="Guy B.J."/>
            <person name="Haga K."/>
            <person name="Haiech J."/>
            <person name="Harwood C.R."/>
            <person name="Henaut A."/>
            <person name="Hilbert H."/>
            <person name="Holsappel S."/>
            <person name="Hosono S."/>
            <person name="Hullo M.-F."/>
            <person name="Itaya M."/>
            <person name="Jones L.-M."/>
            <person name="Joris B."/>
            <person name="Karamata D."/>
            <person name="Kasahara Y."/>
            <person name="Klaerr-Blanchard M."/>
            <person name="Klein C."/>
            <person name="Kobayashi Y."/>
            <person name="Koetter P."/>
            <person name="Koningstein G."/>
            <person name="Krogh S."/>
            <person name="Kumano M."/>
            <person name="Kurita K."/>
            <person name="Lapidus A."/>
            <person name="Lardinois S."/>
            <person name="Lauber J."/>
            <person name="Lazarevic V."/>
            <person name="Lee S.-M."/>
            <person name="Levine A."/>
            <person name="Liu H."/>
            <person name="Masuda S."/>
            <person name="Mauel C."/>
            <person name="Medigue C."/>
            <person name="Medina N."/>
            <person name="Mellado R.P."/>
            <person name="Mizuno M."/>
            <person name="Moestl D."/>
            <person name="Nakai S."/>
            <person name="Noback M."/>
            <person name="Noone D."/>
            <person name="O'Reilly M."/>
            <person name="Ogawa K."/>
            <person name="Ogiwara A."/>
            <person name="Oudega B."/>
            <person name="Park S.-H."/>
            <person name="Parro V."/>
            <person name="Pohl T.M."/>
            <person name="Portetelle D."/>
            <person name="Porwollik S."/>
            <person name="Prescott A.M."/>
            <person name="Presecan E."/>
            <person name="Pujic P."/>
            <person name="Purnelle B."/>
            <person name="Rapoport G."/>
            <person name="Rey M."/>
            <person name="Reynolds S."/>
            <person name="Rieger M."/>
            <person name="Rivolta C."/>
            <person name="Rocha E."/>
            <person name="Roche B."/>
            <person name="Rose M."/>
            <person name="Sadaie Y."/>
            <person name="Sato T."/>
            <person name="Scanlan E."/>
            <person name="Schleich S."/>
            <person name="Schroeter R."/>
            <person name="Scoffone F."/>
            <person name="Sekiguchi J."/>
            <person name="Sekowska A."/>
            <person name="Seror S.J."/>
            <person name="Serror P."/>
            <person name="Shin B.-S."/>
            <person name="Soldo B."/>
            <person name="Sorokin A."/>
            <person name="Tacconi E."/>
            <person name="Takagi T."/>
            <person name="Takahashi H."/>
            <person name="Takemaru K."/>
            <person name="Takeuchi M."/>
            <person name="Tamakoshi A."/>
            <person name="Tanaka T."/>
            <person name="Terpstra P."/>
            <person name="Tognoni A."/>
            <person name="Tosato V."/>
            <person name="Uchiyama S."/>
            <person name="Vandenbol M."/>
            <person name="Vannier F."/>
            <person name="Vassarotti A."/>
            <person name="Viari A."/>
            <person name="Wambutt R."/>
            <person name="Wedler E."/>
            <person name="Wedler H."/>
            <person name="Weitzenegger T."/>
            <person name="Winters P."/>
            <person name="Wipat A."/>
            <person name="Yamamoto H."/>
            <person name="Yamane K."/>
            <person name="Yasumoto K."/>
            <person name="Yata K."/>
            <person name="Yoshida K."/>
            <person name="Yoshikawa H.-F."/>
            <person name="Zumstein E."/>
            <person name="Yoshikawa H."/>
            <person name="Danchin A."/>
        </authorList>
    </citation>
    <scope>NUCLEOTIDE SEQUENCE [LARGE SCALE GENOMIC DNA]</scope>
    <source>
        <strain>168</strain>
    </source>
</reference>
<dbReference type="EMBL" id="AJ222587">
    <property type="protein sequence ID" value="CAA10876.1"/>
    <property type="molecule type" value="Genomic_DNA"/>
</dbReference>
<dbReference type="EMBL" id="AL009126">
    <property type="protein sequence ID" value="CAB13287.1"/>
    <property type="molecule type" value="Genomic_DNA"/>
</dbReference>
<dbReference type="PIR" id="B69866">
    <property type="entry name" value="B69866"/>
</dbReference>
<dbReference type="SMR" id="O34827"/>
<dbReference type="FunCoup" id="O34827">
    <property type="interactions" value="37"/>
</dbReference>
<dbReference type="STRING" id="224308.BSU14140"/>
<dbReference type="PaxDb" id="224308-BSU14140"/>
<dbReference type="EnsemblBacteria" id="CAB13287">
    <property type="protein sequence ID" value="CAB13287"/>
    <property type="gene ID" value="BSU_14140"/>
</dbReference>
<dbReference type="GeneID" id="939197"/>
<dbReference type="KEGG" id="bsu:BSU14140"/>
<dbReference type="PATRIC" id="fig|224308.179.peg.1543"/>
<dbReference type="eggNOG" id="COG0583">
    <property type="taxonomic scope" value="Bacteria"/>
</dbReference>
<dbReference type="InParanoid" id="O34827"/>
<dbReference type="OrthoDB" id="107670at2"/>
<dbReference type="PhylomeDB" id="O34827"/>
<dbReference type="BioCyc" id="BSUB:BSU14140-MONOMER"/>
<dbReference type="Proteomes" id="UP000001570">
    <property type="component" value="Chromosome"/>
</dbReference>
<dbReference type="GO" id="GO:0003700">
    <property type="term" value="F:DNA-binding transcription factor activity"/>
    <property type="evidence" value="ECO:0007669"/>
    <property type="project" value="InterPro"/>
</dbReference>
<dbReference type="GO" id="GO:0000976">
    <property type="term" value="F:transcription cis-regulatory region binding"/>
    <property type="evidence" value="ECO:0000318"/>
    <property type="project" value="GO_Central"/>
</dbReference>
<dbReference type="GO" id="GO:0006355">
    <property type="term" value="P:regulation of DNA-templated transcription"/>
    <property type="evidence" value="ECO:0000318"/>
    <property type="project" value="GO_Central"/>
</dbReference>
<dbReference type="CDD" id="cd05466">
    <property type="entry name" value="PBP2_LTTR_substrate"/>
    <property type="match status" value="1"/>
</dbReference>
<dbReference type="Gene3D" id="3.40.190.290">
    <property type="match status" value="1"/>
</dbReference>
<dbReference type="Gene3D" id="1.10.10.10">
    <property type="entry name" value="Winged helix-like DNA-binding domain superfamily/Winged helix DNA-binding domain"/>
    <property type="match status" value="1"/>
</dbReference>
<dbReference type="InterPro" id="IPR005119">
    <property type="entry name" value="LysR_subst-bd"/>
</dbReference>
<dbReference type="InterPro" id="IPR000847">
    <property type="entry name" value="Tscrpt_reg_HTH_LysR"/>
</dbReference>
<dbReference type="InterPro" id="IPR036388">
    <property type="entry name" value="WH-like_DNA-bd_sf"/>
</dbReference>
<dbReference type="InterPro" id="IPR036390">
    <property type="entry name" value="WH_DNA-bd_sf"/>
</dbReference>
<dbReference type="PANTHER" id="PTHR30126:SF78">
    <property type="entry name" value="HTH LYSR-TYPE DOMAIN-CONTAINING PROTEIN"/>
    <property type="match status" value="1"/>
</dbReference>
<dbReference type="PANTHER" id="PTHR30126">
    <property type="entry name" value="HTH-TYPE TRANSCRIPTIONAL REGULATOR"/>
    <property type="match status" value="1"/>
</dbReference>
<dbReference type="Pfam" id="PF00126">
    <property type="entry name" value="HTH_1"/>
    <property type="match status" value="1"/>
</dbReference>
<dbReference type="Pfam" id="PF03466">
    <property type="entry name" value="LysR_substrate"/>
    <property type="match status" value="1"/>
</dbReference>
<dbReference type="PRINTS" id="PR00039">
    <property type="entry name" value="HTHLYSR"/>
</dbReference>
<dbReference type="SUPFAM" id="SSF53850">
    <property type="entry name" value="Periplasmic binding protein-like II"/>
    <property type="match status" value="1"/>
</dbReference>
<dbReference type="SUPFAM" id="SSF46785">
    <property type="entry name" value="Winged helix' DNA-binding domain"/>
    <property type="match status" value="1"/>
</dbReference>
<dbReference type="PROSITE" id="PS50931">
    <property type="entry name" value="HTH_LYSR"/>
    <property type="match status" value="1"/>
</dbReference>
<gene>
    <name type="primary">ykuM</name>
    <name type="ordered locus">BSU14140</name>
</gene>
<feature type="chain" id="PRO_0000105816" description="Uncharacterized HTH-type transcriptional regulator YkuM">
    <location>
        <begin position="1"/>
        <end position="293"/>
    </location>
</feature>
<feature type="domain" description="HTH lysR-type" evidence="1">
    <location>
        <begin position="1"/>
        <end position="58"/>
    </location>
</feature>
<feature type="DNA-binding region" description="H-T-H motif" evidence="1">
    <location>
        <begin position="18"/>
        <end position="37"/>
    </location>
</feature>
<protein>
    <recommendedName>
        <fullName>Uncharacterized HTH-type transcriptional regulator YkuM</fullName>
    </recommendedName>
</protein>
<sequence>MQLQELHMLVVLAEELNMRKAAERLFVSQPALSQRLQTIEKAWGTKIFLRSQKGLTVTPAGEKIIQFANDVTLEQERIRENIDELEGEIHGTLKLAVASIIGQHWLPKVLKTYVEKYPNAKISLITGWSSEMLKSLYEDQVHIGIIRGNPEWKGRKDYLMTDHLYLVDTEISCIEDIAHTERPFIQFKSDSTYFQEIQHWWHQKFKTSPKQTILVDQIETCKQMALHGIGYAILPSVTLQNEDKVNKMPLLDMKGHPIGRDTWLLGYEPAFELKQVQAFVQVIKDMLDQENPF</sequence>
<proteinExistence type="inferred from homology"/>
<comment type="similarity">
    <text evidence="2">Belongs to the LysR transcriptional regulatory family.</text>
</comment>